<reference key="1">
    <citation type="journal article" date="1992" name="Virology">
        <title>The DNA sequence of equine herpesvirus-1.</title>
        <authorList>
            <person name="Telford E.A.R."/>
            <person name="Watson M.S."/>
            <person name="McBride K."/>
            <person name="Davison A.J."/>
        </authorList>
    </citation>
    <scope>NUCLEOTIDE SEQUENCE [LARGE SCALE GENOMIC DNA]</scope>
</reference>
<accession>Q6DLH1</accession>
<accession>P09101</accession>
<accession>Q66681</accession>
<keyword id="KW-1169">Fusion of virus membrane with host cell membrane</keyword>
<keyword id="KW-1168">Fusion of virus membrane with host membrane</keyword>
<keyword id="KW-0325">Glycoprotein</keyword>
<keyword id="KW-1032">Host cell membrane</keyword>
<keyword id="KW-1039">Host endosome</keyword>
<keyword id="KW-1043">Host membrane</keyword>
<keyword id="KW-0472">Membrane</keyword>
<keyword id="KW-1185">Reference proteome</keyword>
<keyword id="KW-0730">Sialic acid</keyword>
<keyword id="KW-0732">Signal</keyword>
<keyword id="KW-0812">Transmembrane</keyword>
<keyword id="KW-1133">Transmembrane helix</keyword>
<keyword id="KW-0261">Viral envelope protein</keyword>
<keyword id="KW-1162">Viral penetration into host cytoplasm</keyword>
<keyword id="KW-0946">Virion</keyword>
<keyword id="KW-1160">Virus entry into host cell</keyword>
<proteinExistence type="inferred from homology"/>
<feature type="signal peptide" evidence="1">
    <location>
        <begin position="1"/>
        <end position="24"/>
    </location>
</feature>
<feature type="chain" id="PRO_0000038239" description="Envelope glycoprotein H" evidence="1">
    <location>
        <begin position="25"/>
        <end position="848"/>
    </location>
</feature>
<feature type="topological domain" description="Virion surface" evidence="1">
    <location>
        <begin position="25"/>
        <end position="808"/>
    </location>
</feature>
<feature type="transmembrane region" description="Helical" evidence="1">
    <location>
        <begin position="809"/>
        <end position="829"/>
    </location>
</feature>
<feature type="topological domain" description="Intravirion" evidence="1">
    <location>
        <begin position="830"/>
        <end position="848"/>
    </location>
</feature>
<feature type="region of interest" description="Disordered" evidence="2">
    <location>
        <begin position="166"/>
        <end position="191"/>
    </location>
</feature>
<feature type="region of interest" description="Interaction with gL" evidence="1">
    <location>
        <begin position="240"/>
        <end position="303"/>
    </location>
</feature>
<feature type="glycosylation site" description="N-linked (GlcNAc...) asparagine; by host" evidence="1">
    <location>
        <position position="36"/>
    </location>
</feature>
<feature type="glycosylation site" description="N-linked (GlcNAc...) asparagine; by host" evidence="1">
    <location>
        <position position="41"/>
    </location>
</feature>
<feature type="glycosylation site" description="N-linked (GlcNAc...) asparagine; by host" evidence="1">
    <location>
        <position position="45"/>
    </location>
</feature>
<feature type="glycosylation site" description="N-linked (GlcNAc...) asparagine; by host" evidence="1">
    <location>
        <position position="60"/>
    </location>
</feature>
<feature type="glycosylation site" description="N-linked (GlcNAc...) asparagine; by host" evidence="1">
    <location>
        <position position="119"/>
    </location>
</feature>
<feature type="glycosylation site" description="N-linked (GlcNAc...) asparagine; by host" evidence="1">
    <location>
        <position position="182"/>
    </location>
</feature>
<feature type="glycosylation site" description="N-linked (GlcNAc...) asparagine; by host" evidence="1">
    <location>
        <position position="210"/>
    </location>
</feature>
<feature type="glycosylation site" description="N-linked (GlcNAc...) asparagine; by host" evidence="1">
    <location>
        <position position="496"/>
    </location>
</feature>
<feature type="glycosylation site" description="N-linked (GlcNAc...) asparagine; by host" evidence="1">
    <location>
        <position position="672"/>
    </location>
</feature>
<feature type="glycosylation site" description="N-linked (GlcNAc...) asparagine; by host" evidence="1">
    <location>
        <position position="766"/>
    </location>
</feature>
<feature type="glycosylation site" description="N-linked (GlcNAc...) asparagine; by host" evidence="1">
    <location>
        <position position="789"/>
    </location>
</feature>
<organismHost>
    <name type="scientific">Equus caballus</name>
    <name type="common">Horse</name>
    <dbReference type="NCBI Taxonomy" id="9796"/>
</organismHost>
<evidence type="ECO:0000255" key="1">
    <source>
        <dbReference type="HAMAP-Rule" id="MF_04033"/>
    </source>
</evidence>
<evidence type="ECO:0000256" key="2">
    <source>
        <dbReference type="SAM" id="MobiDB-lite"/>
    </source>
</evidence>
<comment type="function">
    <text evidence="1">The heterodimer glycoprotein H-glycoprotein L is required for the fusion of viral and plasma membranes leading to virus entry into the host cell. Following initial binding to host receptor, membrane fusion is mediated by the fusion machinery composed of gB and the heterodimer gH/gL. May also be involved in the fusion between the virion envelope and the outer nuclear membrane during virion morphogenesis.</text>
</comment>
<comment type="subunit">
    <text evidence="1">Interacts with glycoprotein L (gL); this interaction is necessary for the correct processing and cell surface expression of gH. The heterodimer gH/gL seems to interact with gB trimers during fusion.</text>
</comment>
<comment type="subcellular location">
    <subcellularLocation>
        <location evidence="1">Virion membrane</location>
        <topology evidence="1">Single-pass type I membrane protein</topology>
    </subcellularLocation>
    <subcellularLocation>
        <location evidence="1">Host cell membrane</location>
        <topology evidence="1">Single-pass type I membrane protein</topology>
    </subcellularLocation>
    <subcellularLocation>
        <location evidence="1">Host endosome membrane</location>
        <topology evidence="1">Single-pass type I membrane protein</topology>
    </subcellularLocation>
    <text evidence="1">During virion morphogenesis, this protein probably accumulates in the endosomes and trans-Golgi where secondary envelopment occurs. It is probably transported to the cell surface from where it is endocytosed and directed to the trans-Golgi network (TGN).</text>
</comment>
<comment type="PTM">
    <text evidence="1">N-glycosylated, O-glycosylated, and sialylated.</text>
</comment>
<comment type="similarity">
    <text evidence="1">Belongs to the herpesviridae glycoprotein H family.</text>
</comment>
<sequence length="848" mass="92842">MLQPYRKMLIFAVVTVAFAMAVWSTPVPATPSGVGNATWANNSFNITRYDKITMGQVYSNTSNSPIFFVVISERNFRIVNTPLGASVFWIPKGAMNPPQHQPCVANGPEPGDPRGPCVNSTVSLLFNENVEPFLMSKNLLEFEVLPDTYITGWTFERSKTATTKSNPVGVVLSPPRGSPSANTTIRDDGGPKKPLSIIDEYTTLVADLQNFTMTLTYISPFAAVWPIEAFQTGITVMGCDTTQVVAYLGHGFMGLQISSVNNPPLEMIVVPNDVSARILNRRPSRLRLEPPGPHAGPIYKVYVLSDGNFYLGHGMSRISREVAAYPEESLDYRYHLSLANLDTLAMLAELSSGKSTDVSYYMYRIVARLAVATFSLAEVIRLSDYMLLQEAIDVDMNLRLIVPLVMKYAAGGAADSSYTSSDVAMDQFDVAQSQIEKIVSDINVEAELRKPMYEHRSLLRSVYAYSRKPLPNAVALADRLILAMYKEAIKDRITWNSTMREVLFFAVGAAAGSHVILTDEPEPGAPAHKDASLFLSLNRNILLLCTAMCTASHAVSAGLKLEEVMAGLVAGGVQFSLLEVFSPCMASTRFDLAEEEHVLDLLSVIPPRLYTDLNTGFEDDGTTIHSYGRSANGILNSRIAYNFDAVSVFTPELASCSTKLPKVLVVLPIFTNRSYVITRTAPSIGLTYSLDGVNIAKPIVISYITYGNCEVSRATIKSGYLDNPGHTQTCVYCGSVFMRYMVSGAIMDLIYIDDKEVELQLVAGENSTIPAFNPKLYTPSMNALLMFPNGTVTLMSAFASYSSFKVPSTYLWASIGGLLLAILILYIIIKMLCGGVTNDGYKLLLSYE</sequence>
<organism>
    <name type="scientific">Equine herpesvirus 1 (strain Ab4p)</name>
    <name type="common">EHV-1</name>
    <name type="synonym">Equine abortion virus</name>
    <dbReference type="NCBI Taxonomy" id="31520"/>
    <lineage>
        <taxon>Viruses</taxon>
        <taxon>Duplodnaviria</taxon>
        <taxon>Heunggongvirae</taxon>
        <taxon>Peploviricota</taxon>
        <taxon>Herviviricetes</taxon>
        <taxon>Herpesvirales</taxon>
        <taxon>Orthoherpesviridae</taxon>
        <taxon>Alphaherpesvirinae</taxon>
        <taxon>Varicellovirus</taxon>
        <taxon>Varicellovirus equidalpha1</taxon>
        <taxon>Equid alphaherpesvirus 1</taxon>
    </lineage>
</organism>
<gene>
    <name evidence="1" type="primary">gH</name>
    <name type="ordered locus">39</name>
</gene>
<name>GH_EHV1B</name>
<dbReference type="EMBL" id="AY665713">
    <property type="protein sequence ID" value="AAT67297.1"/>
    <property type="molecule type" value="Genomic_DNA"/>
</dbReference>
<dbReference type="PIR" id="E36799">
    <property type="entry name" value="VGBED3"/>
</dbReference>
<dbReference type="SMR" id="Q6DLH1"/>
<dbReference type="GlyCosmos" id="Q6DLH1">
    <property type="glycosylation" value="11 sites, No reported glycans"/>
</dbReference>
<dbReference type="KEGG" id="vg:1487534"/>
<dbReference type="Proteomes" id="UP000001189">
    <property type="component" value="Segment"/>
</dbReference>
<dbReference type="GO" id="GO:0044175">
    <property type="term" value="C:host cell endosome membrane"/>
    <property type="evidence" value="ECO:0007669"/>
    <property type="project" value="UniProtKB-SubCell"/>
</dbReference>
<dbReference type="GO" id="GO:0020002">
    <property type="term" value="C:host cell plasma membrane"/>
    <property type="evidence" value="ECO:0007669"/>
    <property type="project" value="UniProtKB-SubCell"/>
</dbReference>
<dbReference type="GO" id="GO:0016020">
    <property type="term" value="C:membrane"/>
    <property type="evidence" value="ECO:0007669"/>
    <property type="project" value="UniProtKB-KW"/>
</dbReference>
<dbReference type="GO" id="GO:0019031">
    <property type="term" value="C:viral envelope"/>
    <property type="evidence" value="ECO:0007669"/>
    <property type="project" value="UniProtKB-KW"/>
</dbReference>
<dbReference type="GO" id="GO:0055036">
    <property type="term" value="C:virion membrane"/>
    <property type="evidence" value="ECO:0007669"/>
    <property type="project" value="UniProtKB-SubCell"/>
</dbReference>
<dbReference type="GO" id="GO:0019064">
    <property type="term" value="P:fusion of virus membrane with host plasma membrane"/>
    <property type="evidence" value="ECO:0007669"/>
    <property type="project" value="UniProtKB-KW"/>
</dbReference>
<dbReference type="GO" id="GO:0046718">
    <property type="term" value="P:symbiont entry into host cell"/>
    <property type="evidence" value="ECO:0007669"/>
    <property type="project" value="UniProtKB-KW"/>
</dbReference>
<dbReference type="Gene3D" id="1.20.58.1340">
    <property type="match status" value="1"/>
</dbReference>
<dbReference type="Gene3D" id="3.30.500.50">
    <property type="match status" value="1"/>
</dbReference>
<dbReference type="Gene3D" id="2.60.40.3190">
    <property type="entry name" value="Herpesvirus glycoprotein H, C-terminal domain"/>
    <property type="match status" value="1"/>
</dbReference>
<dbReference type="HAMAP" id="MF_04033">
    <property type="entry name" value="HSV_GH"/>
    <property type="match status" value="1"/>
</dbReference>
<dbReference type="InterPro" id="IPR003493">
    <property type="entry name" value="Herpes_gH"/>
</dbReference>
<dbReference type="InterPro" id="IPR035305">
    <property type="entry name" value="Herpes_glycoH_C"/>
</dbReference>
<dbReference type="InterPro" id="IPR038172">
    <property type="entry name" value="Herpes_glycoH_C_sf"/>
</dbReference>
<dbReference type="Pfam" id="PF17488">
    <property type="entry name" value="Herpes_glycoH_C"/>
    <property type="match status" value="1"/>
</dbReference>
<dbReference type="Pfam" id="PF02489">
    <property type="entry name" value="Herpes_glycop_H"/>
    <property type="match status" value="1"/>
</dbReference>
<protein>
    <recommendedName>
        <fullName evidence="1">Envelope glycoprotein H</fullName>
        <shortName evidence="1">gH</shortName>
    </recommendedName>
</protein>